<gene>
    <name evidence="1" type="primary">ndhJ</name>
</gene>
<geneLocation type="chloroplast"/>
<proteinExistence type="inferred from homology"/>
<feature type="chain" id="PRO_0000358302" description="NAD(P)H-quinone oxidoreductase subunit J, chloroplastic">
    <location>
        <begin position="1"/>
        <end position="158"/>
    </location>
</feature>
<reference key="1">
    <citation type="journal article" date="2004" name="Mol. Biol. Evol.">
        <title>Chloroplast phylogeny indicates that bryophytes are monophyletic.</title>
        <authorList>
            <person name="Nishiyama T."/>
            <person name="Wolf P.G."/>
            <person name="Kugita M."/>
            <person name="Sinclair R.B."/>
            <person name="Sugita M."/>
            <person name="Sugiura C."/>
            <person name="Wakasugi T."/>
            <person name="Yamada K."/>
            <person name="Yoshinaga K."/>
            <person name="Yamaguchi K."/>
            <person name="Ueda K."/>
            <person name="Hasebe M."/>
        </authorList>
    </citation>
    <scope>NUCLEOTIDE SEQUENCE [LARGE SCALE GENOMIC DNA]</scope>
    <source>
        <strain>Kingyoku</strain>
    </source>
</reference>
<protein>
    <recommendedName>
        <fullName evidence="1">NAD(P)H-quinone oxidoreductase subunit J, chloroplastic</fullName>
        <ecNumber evidence="1">7.1.1.-</ecNumber>
    </recommendedName>
    <alternativeName>
        <fullName>NAD(P)H dehydrogenase subunit J</fullName>
    </alternativeName>
    <alternativeName>
        <fullName evidence="1">NADH-plastoquinone oxidoreductase subunit J</fullName>
    </alternativeName>
</protein>
<keyword id="KW-0150">Chloroplast</keyword>
<keyword id="KW-0472">Membrane</keyword>
<keyword id="KW-0520">NAD</keyword>
<keyword id="KW-0521">NADP</keyword>
<keyword id="KW-0934">Plastid</keyword>
<keyword id="KW-0618">Plastoquinone</keyword>
<keyword id="KW-0874">Quinone</keyword>
<keyword id="KW-0793">Thylakoid</keyword>
<keyword id="KW-1278">Translocase</keyword>
<keyword id="KW-0813">Transport</keyword>
<dbReference type="EC" id="7.1.1.-" evidence="1"/>
<dbReference type="EMBL" id="AP004638">
    <property type="protein sequence ID" value="BAB84219.1"/>
    <property type="molecule type" value="Genomic_DNA"/>
</dbReference>
<dbReference type="RefSeq" id="NP_569632.1">
    <property type="nucleotide sequence ID" value="NC_003386.1"/>
</dbReference>
<dbReference type="SMR" id="Q8WI15"/>
<dbReference type="GeneID" id="2545125"/>
<dbReference type="GO" id="GO:0009535">
    <property type="term" value="C:chloroplast thylakoid membrane"/>
    <property type="evidence" value="ECO:0007669"/>
    <property type="project" value="UniProtKB-SubCell"/>
</dbReference>
<dbReference type="GO" id="GO:0008137">
    <property type="term" value="F:NADH dehydrogenase (ubiquinone) activity"/>
    <property type="evidence" value="ECO:0007669"/>
    <property type="project" value="InterPro"/>
</dbReference>
<dbReference type="GO" id="GO:0048038">
    <property type="term" value="F:quinone binding"/>
    <property type="evidence" value="ECO:0007669"/>
    <property type="project" value="UniProtKB-KW"/>
</dbReference>
<dbReference type="GO" id="GO:0019684">
    <property type="term" value="P:photosynthesis, light reaction"/>
    <property type="evidence" value="ECO:0007669"/>
    <property type="project" value="UniProtKB-UniRule"/>
</dbReference>
<dbReference type="Gene3D" id="3.30.460.80">
    <property type="entry name" value="NADH:ubiquinone oxidoreductase, 30kDa subunit"/>
    <property type="match status" value="1"/>
</dbReference>
<dbReference type="HAMAP" id="MF_01357">
    <property type="entry name" value="NDH1_NuoC"/>
    <property type="match status" value="1"/>
</dbReference>
<dbReference type="InterPro" id="IPR010218">
    <property type="entry name" value="NADH_DH_suC"/>
</dbReference>
<dbReference type="InterPro" id="IPR037232">
    <property type="entry name" value="NADH_quin_OxRdtase_su_C/D-like"/>
</dbReference>
<dbReference type="InterPro" id="IPR001268">
    <property type="entry name" value="NADH_UbQ_OxRdtase_30kDa_su"/>
</dbReference>
<dbReference type="NCBIfam" id="NF009141">
    <property type="entry name" value="PRK12494.1"/>
    <property type="match status" value="1"/>
</dbReference>
<dbReference type="PANTHER" id="PTHR10884:SF14">
    <property type="entry name" value="NADH DEHYDROGENASE [UBIQUINONE] IRON-SULFUR PROTEIN 3, MITOCHONDRIAL"/>
    <property type="match status" value="1"/>
</dbReference>
<dbReference type="PANTHER" id="PTHR10884">
    <property type="entry name" value="NADH DEHYDROGENASE UBIQUINONE IRON-SULFUR PROTEIN 3"/>
    <property type="match status" value="1"/>
</dbReference>
<dbReference type="Pfam" id="PF00329">
    <property type="entry name" value="Complex1_30kDa"/>
    <property type="match status" value="1"/>
</dbReference>
<dbReference type="SUPFAM" id="SSF143243">
    <property type="entry name" value="Nqo5-like"/>
    <property type="match status" value="1"/>
</dbReference>
<name>NDHJ_PSINU</name>
<evidence type="ECO:0000255" key="1">
    <source>
        <dbReference type="HAMAP-Rule" id="MF_01357"/>
    </source>
</evidence>
<organism>
    <name type="scientific">Psilotum nudum</name>
    <name type="common">Whisk fern</name>
    <name type="synonym">Lycopodium nudum</name>
    <dbReference type="NCBI Taxonomy" id="3240"/>
    <lineage>
        <taxon>Eukaryota</taxon>
        <taxon>Viridiplantae</taxon>
        <taxon>Streptophyta</taxon>
        <taxon>Embryophyta</taxon>
        <taxon>Tracheophyta</taxon>
        <taxon>Polypodiopsida</taxon>
        <taxon>Ophioglossidae</taxon>
        <taxon>Psilotales</taxon>
        <taxon>Psilotaceae</taxon>
        <taxon>Psilotum</taxon>
    </lineage>
</organism>
<accession>Q8WI15</accession>
<sequence>MQGRVSVWLSQHKLAHRPSGFDYQGIEIIQIKSEDWPSIAVALYIYGFNYLRSQCAYDVMPGGFLASVYHLTKLQDNADQPEEVCIKILVSRESPKIPSIFWVWKSADFQERESYDMSGIHYESHPRLKRILMPESWIGWPLRKDYVVPNFYELQDAY</sequence>
<comment type="function">
    <text evidence="1">NDH shuttles electrons from NAD(P)H:plastoquinone, via FMN and iron-sulfur (Fe-S) centers, to quinones in the photosynthetic chain and possibly in a chloroplast respiratory chain. The immediate electron acceptor for the enzyme in this species is believed to be plastoquinone. Couples the redox reaction to proton translocation, and thus conserves the redox energy in a proton gradient.</text>
</comment>
<comment type="catalytic activity">
    <reaction evidence="1">
        <text>a plastoquinone + NADH + (n+1) H(+)(in) = a plastoquinol + NAD(+) + n H(+)(out)</text>
        <dbReference type="Rhea" id="RHEA:42608"/>
        <dbReference type="Rhea" id="RHEA-COMP:9561"/>
        <dbReference type="Rhea" id="RHEA-COMP:9562"/>
        <dbReference type="ChEBI" id="CHEBI:15378"/>
        <dbReference type="ChEBI" id="CHEBI:17757"/>
        <dbReference type="ChEBI" id="CHEBI:57540"/>
        <dbReference type="ChEBI" id="CHEBI:57945"/>
        <dbReference type="ChEBI" id="CHEBI:62192"/>
    </reaction>
</comment>
<comment type="catalytic activity">
    <reaction evidence="1">
        <text>a plastoquinone + NADPH + (n+1) H(+)(in) = a plastoquinol + NADP(+) + n H(+)(out)</text>
        <dbReference type="Rhea" id="RHEA:42612"/>
        <dbReference type="Rhea" id="RHEA-COMP:9561"/>
        <dbReference type="Rhea" id="RHEA-COMP:9562"/>
        <dbReference type="ChEBI" id="CHEBI:15378"/>
        <dbReference type="ChEBI" id="CHEBI:17757"/>
        <dbReference type="ChEBI" id="CHEBI:57783"/>
        <dbReference type="ChEBI" id="CHEBI:58349"/>
        <dbReference type="ChEBI" id="CHEBI:62192"/>
    </reaction>
</comment>
<comment type="subunit">
    <text evidence="1">NDH is composed of at least 16 different subunits, 5 of which are encoded in the nucleus.</text>
</comment>
<comment type="subcellular location">
    <subcellularLocation>
        <location evidence="1">Plastid</location>
        <location evidence="1">Chloroplast thylakoid membrane</location>
        <topology evidence="1">Peripheral membrane protein</topology>
        <orientation evidence="1">Stromal side</orientation>
    </subcellularLocation>
</comment>
<comment type="similarity">
    <text evidence="1">Belongs to the complex I 30 kDa subunit family.</text>
</comment>